<dbReference type="EC" id="2.1.3.2" evidence="1"/>
<dbReference type="EMBL" id="BX640450">
    <property type="protein sequence ID" value="CAE34766.1"/>
    <property type="molecule type" value="Genomic_DNA"/>
</dbReference>
<dbReference type="RefSeq" id="WP_003820560.1">
    <property type="nucleotide sequence ID" value="NC_002927.3"/>
</dbReference>
<dbReference type="SMR" id="Q7WF77"/>
<dbReference type="KEGG" id="bbr:BB4403"/>
<dbReference type="eggNOG" id="COG0540">
    <property type="taxonomic scope" value="Bacteria"/>
</dbReference>
<dbReference type="HOGENOM" id="CLU_043846_2_0_4"/>
<dbReference type="UniPathway" id="UPA00070">
    <property type="reaction ID" value="UER00116"/>
</dbReference>
<dbReference type="Proteomes" id="UP000001027">
    <property type="component" value="Chromosome"/>
</dbReference>
<dbReference type="GO" id="GO:0005829">
    <property type="term" value="C:cytosol"/>
    <property type="evidence" value="ECO:0007669"/>
    <property type="project" value="TreeGrafter"/>
</dbReference>
<dbReference type="GO" id="GO:0016597">
    <property type="term" value="F:amino acid binding"/>
    <property type="evidence" value="ECO:0007669"/>
    <property type="project" value="InterPro"/>
</dbReference>
<dbReference type="GO" id="GO:0004070">
    <property type="term" value="F:aspartate carbamoyltransferase activity"/>
    <property type="evidence" value="ECO:0007669"/>
    <property type="project" value="UniProtKB-UniRule"/>
</dbReference>
<dbReference type="GO" id="GO:0006207">
    <property type="term" value="P:'de novo' pyrimidine nucleobase biosynthetic process"/>
    <property type="evidence" value="ECO:0007669"/>
    <property type="project" value="InterPro"/>
</dbReference>
<dbReference type="GO" id="GO:0044205">
    <property type="term" value="P:'de novo' UMP biosynthetic process"/>
    <property type="evidence" value="ECO:0007669"/>
    <property type="project" value="UniProtKB-UniRule"/>
</dbReference>
<dbReference type="GO" id="GO:0006520">
    <property type="term" value="P:amino acid metabolic process"/>
    <property type="evidence" value="ECO:0007669"/>
    <property type="project" value="InterPro"/>
</dbReference>
<dbReference type="FunFam" id="3.40.50.1370:FF:000007">
    <property type="entry name" value="Aspartate carbamoyltransferase"/>
    <property type="match status" value="1"/>
</dbReference>
<dbReference type="Gene3D" id="3.40.50.1370">
    <property type="entry name" value="Aspartate/ornithine carbamoyltransferase"/>
    <property type="match status" value="2"/>
</dbReference>
<dbReference type="HAMAP" id="MF_00001">
    <property type="entry name" value="Asp_carb_tr"/>
    <property type="match status" value="1"/>
</dbReference>
<dbReference type="InterPro" id="IPR006132">
    <property type="entry name" value="Asp/Orn_carbamoyltranf_P-bd"/>
</dbReference>
<dbReference type="InterPro" id="IPR006130">
    <property type="entry name" value="Asp/Orn_carbamoylTrfase"/>
</dbReference>
<dbReference type="InterPro" id="IPR036901">
    <property type="entry name" value="Asp/Orn_carbamoylTrfase_sf"/>
</dbReference>
<dbReference type="InterPro" id="IPR002082">
    <property type="entry name" value="Asp_carbamoyltransf"/>
</dbReference>
<dbReference type="InterPro" id="IPR006131">
    <property type="entry name" value="Asp_carbamoyltransf_Asp/Orn-bd"/>
</dbReference>
<dbReference type="NCBIfam" id="TIGR00670">
    <property type="entry name" value="asp_carb_tr"/>
    <property type="match status" value="1"/>
</dbReference>
<dbReference type="NCBIfam" id="NF002032">
    <property type="entry name" value="PRK00856.1"/>
    <property type="match status" value="1"/>
</dbReference>
<dbReference type="PANTHER" id="PTHR45753:SF6">
    <property type="entry name" value="ASPARTATE CARBAMOYLTRANSFERASE"/>
    <property type="match status" value="1"/>
</dbReference>
<dbReference type="PANTHER" id="PTHR45753">
    <property type="entry name" value="ORNITHINE CARBAMOYLTRANSFERASE, MITOCHONDRIAL"/>
    <property type="match status" value="1"/>
</dbReference>
<dbReference type="Pfam" id="PF00185">
    <property type="entry name" value="OTCace"/>
    <property type="match status" value="1"/>
</dbReference>
<dbReference type="Pfam" id="PF02729">
    <property type="entry name" value="OTCace_N"/>
    <property type="match status" value="1"/>
</dbReference>
<dbReference type="PRINTS" id="PR00100">
    <property type="entry name" value="AOTCASE"/>
</dbReference>
<dbReference type="PRINTS" id="PR00101">
    <property type="entry name" value="ATCASE"/>
</dbReference>
<dbReference type="SUPFAM" id="SSF53671">
    <property type="entry name" value="Aspartate/ornithine carbamoyltransferase"/>
    <property type="match status" value="1"/>
</dbReference>
<dbReference type="PROSITE" id="PS00097">
    <property type="entry name" value="CARBAMOYLTRANSFERASE"/>
    <property type="match status" value="1"/>
</dbReference>
<comment type="function">
    <text evidence="1">Catalyzes the condensation of carbamoyl phosphate and aspartate to form carbamoyl aspartate and inorganic phosphate, the committed step in the de novo pyrimidine nucleotide biosynthesis pathway.</text>
</comment>
<comment type="catalytic activity">
    <reaction evidence="1">
        <text>carbamoyl phosphate + L-aspartate = N-carbamoyl-L-aspartate + phosphate + H(+)</text>
        <dbReference type="Rhea" id="RHEA:20013"/>
        <dbReference type="ChEBI" id="CHEBI:15378"/>
        <dbReference type="ChEBI" id="CHEBI:29991"/>
        <dbReference type="ChEBI" id="CHEBI:32814"/>
        <dbReference type="ChEBI" id="CHEBI:43474"/>
        <dbReference type="ChEBI" id="CHEBI:58228"/>
        <dbReference type="EC" id="2.1.3.2"/>
    </reaction>
</comment>
<comment type="pathway">
    <text evidence="1">Pyrimidine metabolism; UMP biosynthesis via de novo pathway; (S)-dihydroorotate from bicarbonate: step 2/3.</text>
</comment>
<comment type="subunit">
    <text evidence="1">Heterododecamer (2C3:3R2) of six catalytic PyrB chains organized as two trimers (C3), and six regulatory PyrI chains organized as three dimers (R2).</text>
</comment>
<comment type="similarity">
    <text evidence="1">Belongs to the aspartate/ornithine carbamoyltransferase superfamily. ATCase family.</text>
</comment>
<sequence length="317" mass="34362">MLNPQLNRHGELIHLLSTEGLPRRIIEQILDLAATFVPAPGQEFPKLPLLHGKSVFNLFFENSTRTRTTFEIAAKRLSADVVNLNIAASSTSKGESLLDTIANLSAMQADLFVVRHGASGAPYLIAQHVAPHVHVINAGDGRHAHPTQALLDMYTIRHHKGDFNQLTVAIVGDVLHSRVARSDIHALTTLGVPEVRVVAPATLLPEGLAQMGVRVCTDMEEGLRDADVVIMLRLQNERMRGALLPSAHEYFKHYGLTQARLALARPDAIVMHPGPMNRGVEIASEVADSGQAVILDQVTFGIAVRMAAMSLVAGVRP</sequence>
<reference key="1">
    <citation type="journal article" date="2003" name="Nat. Genet.">
        <title>Comparative analysis of the genome sequences of Bordetella pertussis, Bordetella parapertussis and Bordetella bronchiseptica.</title>
        <authorList>
            <person name="Parkhill J."/>
            <person name="Sebaihia M."/>
            <person name="Preston A."/>
            <person name="Murphy L.D."/>
            <person name="Thomson N.R."/>
            <person name="Harris D.E."/>
            <person name="Holden M.T.G."/>
            <person name="Churcher C.M."/>
            <person name="Bentley S.D."/>
            <person name="Mungall K.L."/>
            <person name="Cerdeno-Tarraga A.-M."/>
            <person name="Temple L."/>
            <person name="James K.D."/>
            <person name="Harris B."/>
            <person name="Quail M.A."/>
            <person name="Achtman M."/>
            <person name="Atkin R."/>
            <person name="Baker S."/>
            <person name="Basham D."/>
            <person name="Bason N."/>
            <person name="Cherevach I."/>
            <person name="Chillingworth T."/>
            <person name="Collins M."/>
            <person name="Cronin A."/>
            <person name="Davis P."/>
            <person name="Doggett J."/>
            <person name="Feltwell T."/>
            <person name="Goble A."/>
            <person name="Hamlin N."/>
            <person name="Hauser H."/>
            <person name="Holroyd S."/>
            <person name="Jagels K."/>
            <person name="Leather S."/>
            <person name="Moule S."/>
            <person name="Norberczak H."/>
            <person name="O'Neil S."/>
            <person name="Ormond D."/>
            <person name="Price C."/>
            <person name="Rabbinowitsch E."/>
            <person name="Rutter S."/>
            <person name="Sanders M."/>
            <person name="Saunders D."/>
            <person name="Seeger K."/>
            <person name="Sharp S."/>
            <person name="Simmonds M."/>
            <person name="Skelton J."/>
            <person name="Squares R."/>
            <person name="Squares S."/>
            <person name="Stevens K."/>
            <person name="Unwin L."/>
            <person name="Whitehead S."/>
            <person name="Barrell B.G."/>
            <person name="Maskell D.J."/>
        </authorList>
    </citation>
    <scope>NUCLEOTIDE SEQUENCE [LARGE SCALE GENOMIC DNA]</scope>
    <source>
        <strain>ATCC BAA-588 / NCTC 13252 / RB50</strain>
    </source>
</reference>
<accession>Q7WF77</accession>
<protein>
    <recommendedName>
        <fullName evidence="1">Aspartate carbamoyltransferase catalytic subunit</fullName>
        <ecNumber evidence="1">2.1.3.2</ecNumber>
    </recommendedName>
    <alternativeName>
        <fullName evidence="1">Aspartate transcarbamylase</fullName>
        <shortName evidence="1">ATCase</shortName>
    </alternativeName>
</protein>
<organism>
    <name type="scientific">Bordetella bronchiseptica (strain ATCC BAA-588 / NCTC 13252 / RB50)</name>
    <name type="common">Alcaligenes bronchisepticus</name>
    <dbReference type="NCBI Taxonomy" id="257310"/>
    <lineage>
        <taxon>Bacteria</taxon>
        <taxon>Pseudomonadati</taxon>
        <taxon>Pseudomonadota</taxon>
        <taxon>Betaproteobacteria</taxon>
        <taxon>Burkholderiales</taxon>
        <taxon>Alcaligenaceae</taxon>
        <taxon>Bordetella</taxon>
    </lineage>
</organism>
<feature type="chain" id="PRO_0000113104" description="Aspartate carbamoyltransferase catalytic subunit">
    <location>
        <begin position="1"/>
        <end position="317"/>
    </location>
</feature>
<feature type="binding site" evidence="1">
    <location>
        <position position="65"/>
    </location>
    <ligand>
        <name>carbamoyl phosphate</name>
        <dbReference type="ChEBI" id="CHEBI:58228"/>
    </ligand>
</feature>
<feature type="binding site" evidence="1">
    <location>
        <position position="66"/>
    </location>
    <ligand>
        <name>carbamoyl phosphate</name>
        <dbReference type="ChEBI" id="CHEBI:58228"/>
    </ligand>
</feature>
<feature type="binding site" evidence="1">
    <location>
        <position position="93"/>
    </location>
    <ligand>
        <name>L-aspartate</name>
        <dbReference type="ChEBI" id="CHEBI:29991"/>
    </ligand>
</feature>
<feature type="binding site" evidence="1">
    <location>
        <position position="115"/>
    </location>
    <ligand>
        <name>carbamoyl phosphate</name>
        <dbReference type="ChEBI" id="CHEBI:58228"/>
    </ligand>
</feature>
<feature type="binding site" evidence="1">
    <location>
        <position position="145"/>
    </location>
    <ligand>
        <name>carbamoyl phosphate</name>
        <dbReference type="ChEBI" id="CHEBI:58228"/>
    </ligand>
</feature>
<feature type="binding site" evidence="1">
    <location>
        <position position="148"/>
    </location>
    <ligand>
        <name>carbamoyl phosphate</name>
        <dbReference type="ChEBI" id="CHEBI:58228"/>
    </ligand>
</feature>
<feature type="binding site" evidence="1">
    <location>
        <position position="178"/>
    </location>
    <ligand>
        <name>L-aspartate</name>
        <dbReference type="ChEBI" id="CHEBI:29991"/>
    </ligand>
</feature>
<feature type="binding site" evidence="1">
    <location>
        <position position="233"/>
    </location>
    <ligand>
        <name>L-aspartate</name>
        <dbReference type="ChEBI" id="CHEBI:29991"/>
    </ligand>
</feature>
<feature type="binding site" evidence="1">
    <location>
        <position position="274"/>
    </location>
    <ligand>
        <name>carbamoyl phosphate</name>
        <dbReference type="ChEBI" id="CHEBI:58228"/>
    </ligand>
</feature>
<feature type="binding site" evidence="1">
    <location>
        <position position="275"/>
    </location>
    <ligand>
        <name>carbamoyl phosphate</name>
        <dbReference type="ChEBI" id="CHEBI:58228"/>
    </ligand>
</feature>
<evidence type="ECO:0000255" key="1">
    <source>
        <dbReference type="HAMAP-Rule" id="MF_00001"/>
    </source>
</evidence>
<name>PYRB_BORBR</name>
<keyword id="KW-0665">Pyrimidine biosynthesis</keyword>
<keyword id="KW-0808">Transferase</keyword>
<gene>
    <name evidence="1" type="primary">pyrB</name>
    <name type="ordered locus">BB4403</name>
</gene>
<proteinExistence type="inferred from homology"/>